<comment type="function">
    <text evidence="1">Secreted metalloproteinase that allows assimilation of proteinaceous substrates. Shows high activities on basic nuclear substrates such as histone and protamine. May be involved in virulence (By similarity).</text>
</comment>
<comment type="catalytic activity">
    <reaction>
        <text>Preferential cleavage of bonds with hydrophobic residues in P1'. Also 3-Asn-|-Gln-4 and 8-Gly-|-Ser-9 bonds in insulin B chain.</text>
        <dbReference type="EC" id="3.4.24.39"/>
    </reaction>
</comment>
<comment type="cofactor">
    <cofactor evidence="1">
        <name>Zn(2+)</name>
        <dbReference type="ChEBI" id="CHEBI:29105"/>
    </cofactor>
    <text evidence="1">Binds 1 zinc ion per subunit.</text>
</comment>
<comment type="subcellular location">
    <subcellularLocation>
        <location evidence="1">Secreted</location>
    </subcellularLocation>
</comment>
<comment type="similarity">
    <text evidence="4">Belongs to the peptidase M35 family.</text>
</comment>
<proteinExistence type="inferred from homology"/>
<accession>Q4WQR6</accession>
<gene>
    <name type="ORF">AFUA_4G13750</name>
</gene>
<feature type="signal peptide" evidence="2">
    <location>
        <begin position="1"/>
        <end position="19"/>
    </location>
</feature>
<feature type="propeptide" id="PRO_0000407092" evidence="1">
    <location>
        <begin position="20"/>
        <end position="172"/>
    </location>
</feature>
<feature type="chain" id="PRO_0000407093" description="Neutral protease 2 homolog AFUA_4G13750">
    <location>
        <begin position="173"/>
        <end position="370"/>
    </location>
</feature>
<feature type="active site" evidence="3">
    <location>
        <position position="301"/>
    </location>
</feature>
<feature type="binding site" evidence="3">
    <location>
        <position position="300"/>
    </location>
    <ligand>
        <name>Zn(2+)</name>
        <dbReference type="ChEBI" id="CHEBI:29105"/>
        <note>catalytic</note>
    </ligand>
</feature>
<feature type="binding site" evidence="3">
    <location>
        <position position="304"/>
    </location>
    <ligand>
        <name>Zn(2+)</name>
        <dbReference type="ChEBI" id="CHEBI:29105"/>
        <note>catalytic</note>
    </ligand>
</feature>
<feature type="binding site" evidence="3">
    <location>
        <position position="315"/>
    </location>
    <ligand>
        <name>Zn(2+)</name>
        <dbReference type="ChEBI" id="CHEBI:29105"/>
        <note>catalytic</note>
    </ligand>
</feature>
<feature type="disulfide bond" evidence="1">
    <location>
        <begin position="178"/>
        <end position="250"/>
    </location>
</feature>
<feature type="disulfide bond" evidence="1">
    <location>
        <begin position="257"/>
        <end position="275"/>
    </location>
</feature>
<organism>
    <name type="scientific">Aspergillus fumigatus (strain ATCC MYA-4609 / CBS 101355 / FGSC A1100 / Af293)</name>
    <name type="common">Neosartorya fumigata</name>
    <dbReference type="NCBI Taxonomy" id="330879"/>
    <lineage>
        <taxon>Eukaryota</taxon>
        <taxon>Fungi</taxon>
        <taxon>Dikarya</taxon>
        <taxon>Ascomycota</taxon>
        <taxon>Pezizomycotina</taxon>
        <taxon>Eurotiomycetes</taxon>
        <taxon>Eurotiomycetidae</taxon>
        <taxon>Eurotiales</taxon>
        <taxon>Aspergillaceae</taxon>
        <taxon>Aspergillus</taxon>
        <taxon>Aspergillus subgen. Fumigati</taxon>
    </lineage>
</organism>
<evidence type="ECO:0000250" key="1"/>
<evidence type="ECO:0000255" key="2"/>
<evidence type="ECO:0000255" key="3">
    <source>
        <dbReference type="PROSITE-ProRule" id="PRU10095"/>
    </source>
</evidence>
<evidence type="ECO:0000305" key="4"/>
<reference key="1">
    <citation type="journal article" date="2005" name="Nature">
        <title>Genomic sequence of the pathogenic and allergenic filamentous fungus Aspergillus fumigatus.</title>
        <authorList>
            <person name="Nierman W.C."/>
            <person name="Pain A."/>
            <person name="Anderson M.J."/>
            <person name="Wortman J.R."/>
            <person name="Kim H.S."/>
            <person name="Arroyo J."/>
            <person name="Berriman M."/>
            <person name="Abe K."/>
            <person name="Archer D.B."/>
            <person name="Bermejo C."/>
            <person name="Bennett J.W."/>
            <person name="Bowyer P."/>
            <person name="Chen D."/>
            <person name="Collins M."/>
            <person name="Coulsen R."/>
            <person name="Davies R."/>
            <person name="Dyer P.S."/>
            <person name="Farman M.L."/>
            <person name="Fedorova N."/>
            <person name="Fedorova N.D."/>
            <person name="Feldblyum T.V."/>
            <person name="Fischer R."/>
            <person name="Fosker N."/>
            <person name="Fraser A."/>
            <person name="Garcia J.L."/>
            <person name="Garcia M.J."/>
            <person name="Goble A."/>
            <person name="Goldman G.H."/>
            <person name="Gomi K."/>
            <person name="Griffith-Jones S."/>
            <person name="Gwilliam R."/>
            <person name="Haas B.J."/>
            <person name="Haas H."/>
            <person name="Harris D.E."/>
            <person name="Horiuchi H."/>
            <person name="Huang J."/>
            <person name="Humphray S."/>
            <person name="Jimenez J."/>
            <person name="Keller N."/>
            <person name="Khouri H."/>
            <person name="Kitamoto K."/>
            <person name="Kobayashi T."/>
            <person name="Konzack S."/>
            <person name="Kulkarni R."/>
            <person name="Kumagai T."/>
            <person name="Lafton A."/>
            <person name="Latge J.-P."/>
            <person name="Li W."/>
            <person name="Lord A."/>
            <person name="Lu C."/>
            <person name="Majoros W.H."/>
            <person name="May G.S."/>
            <person name="Miller B.L."/>
            <person name="Mohamoud Y."/>
            <person name="Molina M."/>
            <person name="Monod M."/>
            <person name="Mouyna I."/>
            <person name="Mulligan S."/>
            <person name="Murphy L.D."/>
            <person name="O'Neil S."/>
            <person name="Paulsen I."/>
            <person name="Penalva M.A."/>
            <person name="Pertea M."/>
            <person name="Price C."/>
            <person name="Pritchard B.L."/>
            <person name="Quail M.A."/>
            <person name="Rabbinowitsch E."/>
            <person name="Rawlins N."/>
            <person name="Rajandream M.A."/>
            <person name="Reichard U."/>
            <person name="Renauld H."/>
            <person name="Robson G.D."/>
            <person name="Rodriguez de Cordoba S."/>
            <person name="Rodriguez-Pena J.M."/>
            <person name="Ronning C.M."/>
            <person name="Rutter S."/>
            <person name="Salzberg S.L."/>
            <person name="Sanchez M."/>
            <person name="Sanchez-Ferrero J.C."/>
            <person name="Saunders D."/>
            <person name="Seeger K."/>
            <person name="Squares R."/>
            <person name="Squares S."/>
            <person name="Takeuchi M."/>
            <person name="Tekaia F."/>
            <person name="Turner G."/>
            <person name="Vazquez de Aldana C.R."/>
            <person name="Weidman J."/>
            <person name="White O."/>
            <person name="Woodward J.R."/>
            <person name="Yu J.-H."/>
            <person name="Fraser C.M."/>
            <person name="Galagan J.E."/>
            <person name="Asai K."/>
            <person name="Machida M."/>
            <person name="Hall N."/>
            <person name="Barrell B.G."/>
            <person name="Denning D.W."/>
        </authorList>
    </citation>
    <scope>NUCLEOTIDE SEQUENCE [LARGE SCALE GENOMIC DNA]</scope>
    <source>
        <strain>ATCC MYA-4609 / CBS 101355 / FGSC A1100 / Af293</strain>
    </source>
</reference>
<keyword id="KW-0165">Cleavage on pair of basic residues</keyword>
<keyword id="KW-1015">Disulfide bond</keyword>
<keyword id="KW-0378">Hydrolase</keyword>
<keyword id="KW-0479">Metal-binding</keyword>
<keyword id="KW-0482">Metalloprotease</keyword>
<keyword id="KW-0645">Protease</keyword>
<keyword id="KW-1185">Reference proteome</keyword>
<keyword id="KW-0964">Secreted</keyword>
<keyword id="KW-0732">Signal</keyword>
<keyword id="KW-0843">Virulence</keyword>
<keyword id="KW-0862">Zinc</keyword>
<keyword id="KW-0865">Zymogen</keyword>
<sequence length="370" mass="39405">MKVTILASAILALINGALALPANTPTLDVTLTQVDNTRIKATVKNTGNEKVTFVHLNFFQDAAPVKKVSLFRNATEVEFTGIKRRLLTEGLSDDALTTLAPGATFEDEFDVASTADLTEGGTVTIRTDGFVPITTDRKVSGYIPYQSNELEIEVDAAKAAAVPQAIKLLDRRTKVASCSGSRASALSTALRNAASLANAAASAASSGSSTRFQEYFKTTSSSTRNTVAARFRAVASEASSQSSGKTTYYCTDPYGYCDSNTLAYTLPSSNLIANCDIYYSYLPALTSSCHAQDQATTTLHEFTHAPAVYSPGTDDYAYGYRASTALSASQALLNADTYALFANGTPPPPPSPLHIHFQMLDTNNGYSREP</sequence>
<protein>
    <recommendedName>
        <fullName>Neutral protease 2 homolog AFUA_4G13750</fullName>
        <ecNumber>3.4.24.39</ecNumber>
    </recommendedName>
    <alternativeName>
        <fullName>Deuterolysin AFUA_4G13750</fullName>
    </alternativeName>
</protein>
<dbReference type="EC" id="3.4.24.39"/>
<dbReference type="EMBL" id="AAHF01000005">
    <property type="protein sequence ID" value="EAL89418.1"/>
    <property type="molecule type" value="Genomic_DNA"/>
</dbReference>
<dbReference type="RefSeq" id="XP_751456.1">
    <property type="nucleotide sequence ID" value="XM_746363.1"/>
</dbReference>
<dbReference type="SMR" id="Q4WQR6"/>
<dbReference type="STRING" id="330879.Q4WQR6"/>
<dbReference type="MEROPS" id="M35.002"/>
<dbReference type="EnsemblFungi" id="EAL89418">
    <property type="protein sequence ID" value="EAL89418"/>
    <property type="gene ID" value="AFUA_4G13750"/>
</dbReference>
<dbReference type="GeneID" id="3509585"/>
<dbReference type="KEGG" id="afm:AFUA_4G13750"/>
<dbReference type="eggNOG" id="ENOG502SGF5">
    <property type="taxonomic scope" value="Eukaryota"/>
</dbReference>
<dbReference type="HOGENOM" id="CLU_039313_1_1_1"/>
<dbReference type="InParanoid" id="Q4WQR6"/>
<dbReference type="OMA" id="ANCDLYY"/>
<dbReference type="OrthoDB" id="412874at2759"/>
<dbReference type="Proteomes" id="UP000002530">
    <property type="component" value="Chromosome 4"/>
</dbReference>
<dbReference type="GO" id="GO:0005576">
    <property type="term" value="C:extracellular region"/>
    <property type="evidence" value="ECO:0007669"/>
    <property type="project" value="UniProtKB-SubCell"/>
</dbReference>
<dbReference type="GO" id="GO:0046872">
    <property type="term" value="F:metal ion binding"/>
    <property type="evidence" value="ECO:0007669"/>
    <property type="project" value="UniProtKB-KW"/>
</dbReference>
<dbReference type="GO" id="GO:0004222">
    <property type="term" value="F:metalloendopeptidase activity"/>
    <property type="evidence" value="ECO:0007669"/>
    <property type="project" value="InterPro"/>
</dbReference>
<dbReference type="GO" id="GO:0006508">
    <property type="term" value="P:proteolysis"/>
    <property type="evidence" value="ECO:0007669"/>
    <property type="project" value="UniProtKB-KW"/>
</dbReference>
<dbReference type="CDD" id="cd11008">
    <property type="entry name" value="M35_deuterolysin_like"/>
    <property type="match status" value="1"/>
</dbReference>
<dbReference type="Gene3D" id="2.60.40.2970">
    <property type="match status" value="1"/>
</dbReference>
<dbReference type="Gene3D" id="3.40.390.10">
    <property type="entry name" value="Collagenase (Catalytic Domain)"/>
    <property type="match status" value="1"/>
</dbReference>
<dbReference type="InterPro" id="IPR050414">
    <property type="entry name" value="Fungal_M35_metalloproteases"/>
</dbReference>
<dbReference type="InterPro" id="IPR029463">
    <property type="entry name" value="Lys_MEP"/>
</dbReference>
<dbReference type="InterPro" id="IPR024079">
    <property type="entry name" value="MetalloPept_cat_dom_sf"/>
</dbReference>
<dbReference type="InterPro" id="IPR001384">
    <property type="entry name" value="Peptidase_M35"/>
</dbReference>
<dbReference type="PANTHER" id="PTHR37016">
    <property type="match status" value="1"/>
</dbReference>
<dbReference type="PANTHER" id="PTHR37016:SF3">
    <property type="entry name" value="NEUTRAL PROTEASE 2-RELATED"/>
    <property type="match status" value="1"/>
</dbReference>
<dbReference type="Pfam" id="PF02102">
    <property type="entry name" value="Peptidase_M35"/>
    <property type="match status" value="1"/>
</dbReference>
<dbReference type="PRINTS" id="PR00768">
    <property type="entry name" value="DEUTEROLYSIN"/>
</dbReference>
<dbReference type="SMART" id="SM01351">
    <property type="entry name" value="Aspzincin_M35"/>
    <property type="match status" value="1"/>
</dbReference>
<dbReference type="SUPFAM" id="SSF55486">
    <property type="entry name" value="Metalloproteases ('zincins'), catalytic domain"/>
    <property type="match status" value="1"/>
</dbReference>
<dbReference type="PROSITE" id="PS00142">
    <property type="entry name" value="ZINC_PROTEASE"/>
    <property type="match status" value="1"/>
</dbReference>
<name>NPIIA_ASPFU</name>